<dbReference type="EC" id="1.3.3.3" evidence="1"/>
<dbReference type="EMBL" id="BX571965">
    <property type="protein sequence ID" value="CAH35158.1"/>
    <property type="molecule type" value="Genomic_DNA"/>
</dbReference>
<dbReference type="RefSeq" id="WP_004526433.1">
    <property type="nucleotide sequence ID" value="NZ_CP009538.1"/>
</dbReference>
<dbReference type="RefSeq" id="YP_107785.1">
    <property type="nucleotide sequence ID" value="NC_006350.1"/>
</dbReference>
<dbReference type="SMR" id="Q63VT1"/>
<dbReference type="STRING" id="272560.BPSL1163"/>
<dbReference type="GeneID" id="93059643"/>
<dbReference type="KEGG" id="bps:BPSL1163"/>
<dbReference type="PATRIC" id="fig|272560.51.peg.375"/>
<dbReference type="eggNOG" id="COG0408">
    <property type="taxonomic scope" value="Bacteria"/>
</dbReference>
<dbReference type="UniPathway" id="UPA00251">
    <property type="reaction ID" value="UER00322"/>
</dbReference>
<dbReference type="Proteomes" id="UP000000605">
    <property type="component" value="Chromosome 1"/>
</dbReference>
<dbReference type="GO" id="GO:0005737">
    <property type="term" value="C:cytoplasm"/>
    <property type="evidence" value="ECO:0007669"/>
    <property type="project" value="UniProtKB-SubCell"/>
</dbReference>
<dbReference type="GO" id="GO:0004109">
    <property type="term" value="F:coproporphyrinogen oxidase activity"/>
    <property type="evidence" value="ECO:0007669"/>
    <property type="project" value="UniProtKB-UniRule"/>
</dbReference>
<dbReference type="GO" id="GO:0046872">
    <property type="term" value="F:metal ion binding"/>
    <property type="evidence" value="ECO:0007669"/>
    <property type="project" value="UniProtKB-KW"/>
</dbReference>
<dbReference type="GO" id="GO:0042803">
    <property type="term" value="F:protein homodimerization activity"/>
    <property type="evidence" value="ECO:0000250"/>
    <property type="project" value="UniProtKB"/>
</dbReference>
<dbReference type="GO" id="GO:0006782">
    <property type="term" value="P:protoporphyrinogen IX biosynthetic process"/>
    <property type="evidence" value="ECO:0007669"/>
    <property type="project" value="UniProtKB-UniRule"/>
</dbReference>
<dbReference type="FunFam" id="3.40.1500.10:FF:000001">
    <property type="entry name" value="Oxygen-dependent coproporphyrinogen-III oxidase"/>
    <property type="match status" value="1"/>
</dbReference>
<dbReference type="Gene3D" id="3.40.1500.10">
    <property type="entry name" value="Coproporphyrinogen III oxidase, aerobic"/>
    <property type="match status" value="1"/>
</dbReference>
<dbReference type="HAMAP" id="MF_00333">
    <property type="entry name" value="Coprogen_oxidas"/>
    <property type="match status" value="1"/>
</dbReference>
<dbReference type="InterPro" id="IPR001260">
    <property type="entry name" value="Coprogen_oxidase_aer"/>
</dbReference>
<dbReference type="InterPro" id="IPR036406">
    <property type="entry name" value="Coprogen_oxidase_aer_sf"/>
</dbReference>
<dbReference type="InterPro" id="IPR018375">
    <property type="entry name" value="Coprogen_oxidase_CS"/>
</dbReference>
<dbReference type="NCBIfam" id="NF003727">
    <property type="entry name" value="PRK05330.1"/>
    <property type="match status" value="1"/>
</dbReference>
<dbReference type="PANTHER" id="PTHR10755">
    <property type="entry name" value="COPROPORPHYRINOGEN III OXIDASE, MITOCHONDRIAL"/>
    <property type="match status" value="1"/>
</dbReference>
<dbReference type="PANTHER" id="PTHR10755:SF0">
    <property type="entry name" value="OXYGEN-DEPENDENT COPROPORPHYRINOGEN-III OXIDASE, MITOCHONDRIAL"/>
    <property type="match status" value="1"/>
</dbReference>
<dbReference type="Pfam" id="PF01218">
    <property type="entry name" value="Coprogen_oxidas"/>
    <property type="match status" value="1"/>
</dbReference>
<dbReference type="PIRSF" id="PIRSF000166">
    <property type="entry name" value="Coproporphyri_ox"/>
    <property type="match status" value="1"/>
</dbReference>
<dbReference type="PRINTS" id="PR00073">
    <property type="entry name" value="COPRGNOXDASE"/>
</dbReference>
<dbReference type="SUPFAM" id="SSF102886">
    <property type="entry name" value="Coproporphyrinogen III oxidase"/>
    <property type="match status" value="1"/>
</dbReference>
<dbReference type="PROSITE" id="PS01021">
    <property type="entry name" value="COPROGEN_OXIDASE"/>
    <property type="match status" value="1"/>
</dbReference>
<comment type="function">
    <text evidence="1">Involved in the heme biosynthesis. Catalyzes the aerobic oxidative decarboxylation of propionate groups of rings A and B of coproporphyrinogen-III to yield the vinyl groups in protoporphyrinogen-IX.</text>
</comment>
<comment type="catalytic activity">
    <reaction evidence="1">
        <text>coproporphyrinogen III + O2 + 2 H(+) = protoporphyrinogen IX + 2 CO2 + 2 H2O</text>
        <dbReference type="Rhea" id="RHEA:18257"/>
        <dbReference type="ChEBI" id="CHEBI:15377"/>
        <dbReference type="ChEBI" id="CHEBI:15378"/>
        <dbReference type="ChEBI" id="CHEBI:15379"/>
        <dbReference type="ChEBI" id="CHEBI:16526"/>
        <dbReference type="ChEBI" id="CHEBI:57307"/>
        <dbReference type="ChEBI" id="CHEBI:57309"/>
        <dbReference type="EC" id="1.3.3.3"/>
    </reaction>
</comment>
<comment type="cofactor">
    <cofactor evidence="1">
        <name>a divalent metal cation</name>
        <dbReference type="ChEBI" id="CHEBI:60240"/>
    </cofactor>
</comment>
<comment type="pathway">
    <text evidence="1">Porphyrin-containing compound metabolism; protoporphyrin-IX biosynthesis; protoporphyrinogen-IX from coproporphyrinogen-III (O2 route): step 1/1.</text>
</comment>
<comment type="subunit">
    <text evidence="1">Homodimer.</text>
</comment>
<comment type="subcellular location">
    <subcellularLocation>
        <location evidence="1">Cytoplasm</location>
    </subcellularLocation>
</comment>
<comment type="similarity">
    <text evidence="1">Belongs to the aerobic coproporphyrinogen-III oxidase family.</text>
</comment>
<gene>
    <name evidence="1" type="primary">hemF</name>
    <name type="ordered locus">BPSL1163</name>
</gene>
<organism>
    <name type="scientific">Burkholderia pseudomallei (strain K96243)</name>
    <dbReference type="NCBI Taxonomy" id="272560"/>
    <lineage>
        <taxon>Bacteria</taxon>
        <taxon>Pseudomonadati</taxon>
        <taxon>Pseudomonadota</taxon>
        <taxon>Betaproteobacteria</taxon>
        <taxon>Burkholderiales</taxon>
        <taxon>Burkholderiaceae</taxon>
        <taxon>Burkholderia</taxon>
        <taxon>pseudomallei group</taxon>
    </lineage>
</organism>
<accession>Q63VT1</accession>
<feature type="chain" id="PRO_0000109890" description="Oxygen-dependent coproporphyrinogen-III oxidase">
    <location>
        <begin position="1"/>
        <end position="307"/>
    </location>
</feature>
<feature type="region of interest" description="Important for dimerization" evidence="1">
    <location>
        <begin position="247"/>
        <end position="282"/>
    </location>
</feature>
<feature type="active site" description="Proton donor" evidence="1">
    <location>
        <position position="113"/>
    </location>
</feature>
<feature type="binding site" evidence="1">
    <location>
        <position position="99"/>
    </location>
    <ligand>
        <name>substrate</name>
    </ligand>
</feature>
<feature type="binding site" evidence="1">
    <location>
        <position position="103"/>
    </location>
    <ligand>
        <name>a divalent metal cation</name>
        <dbReference type="ChEBI" id="CHEBI:60240"/>
    </ligand>
</feature>
<feature type="binding site" evidence="1">
    <location>
        <position position="113"/>
    </location>
    <ligand>
        <name>a divalent metal cation</name>
        <dbReference type="ChEBI" id="CHEBI:60240"/>
    </ligand>
</feature>
<feature type="binding site" evidence="1">
    <location>
        <begin position="115"/>
        <end position="117"/>
    </location>
    <ligand>
        <name>substrate</name>
    </ligand>
</feature>
<feature type="binding site" evidence="1">
    <location>
        <position position="152"/>
    </location>
    <ligand>
        <name>a divalent metal cation</name>
        <dbReference type="ChEBI" id="CHEBI:60240"/>
    </ligand>
</feature>
<feature type="binding site" evidence="1">
    <location>
        <position position="182"/>
    </location>
    <ligand>
        <name>a divalent metal cation</name>
        <dbReference type="ChEBI" id="CHEBI:60240"/>
    </ligand>
</feature>
<feature type="binding site" evidence="1">
    <location>
        <begin position="265"/>
        <end position="267"/>
    </location>
    <ligand>
        <name>substrate</name>
    </ligand>
</feature>
<feature type="site" description="Important for dimerization" evidence="1">
    <location>
        <position position="182"/>
    </location>
</feature>
<reference key="1">
    <citation type="journal article" date="2004" name="Proc. Natl. Acad. Sci. U.S.A.">
        <title>Genomic plasticity of the causative agent of melioidosis, Burkholderia pseudomallei.</title>
        <authorList>
            <person name="Holden M.T.G."/>
            <person name="Titball R.W."/>
            <person name="Peacock S.J."/>
            <person name="Cerdeno-Tarraga A.-M."/>
            <person name="Atkins T."/>
            <person name="Crossman L.C."/>
            <person name="Pitt T."/>
            <person name="Churcher C."/>
            <person name="Mungall K.L."/>
            <person name="Bentley S.D."/>
            <person name="Sebaihia M."/>
            <person name="Thomson N.R."/>
            <person name="Bason N."/>
            <person name="Beacham I.R."/>
            <person name="Brooks K."/>
            <person name="Brown K.A."/>
            <person name="Brown N.F."/>
            <person name="Challis G.L."/>
            <person name="Cherevach I."/>
            <person name="Chillingworth T."/>
            <person name="Cronin A."/>
            <person name="Crossett B."/>
            <person name="Davis P."/>
            <person name="DeShazer D."/>
            <person name="Feltwell T."/>
            <person name="Fraser A."/>
            <person name="Hance Z."/>
            <person name="Hauser H."/>
            <person name="Holroyd S."/>
            <person name="Jagels K."/>
            <person name="Keith K.E."/>
            <person name="Maddison M."/>
            <person name="Moule S."/>
            <person name="Price C."/>
            <person name="Quail M.A."/>
            <person name="Rabbinowitsch E."/>
            <person name="Rutherford K."/>
            <person name="Sanders M."/>
            <person name="Simmonds M."/>
            <person name="Songsivilai S."/>
            <person name="Stevens K."/>
            <person name="Tumapa S."/>
            <person name="Vesaratchavest M."/>
            <person name="Whitehead S."/>
            <person name="Yeats C."/>
            <person name="Barrell B.G."/>
            <person name="Oyston P.C.F."/>
            <person name="Parkhill J."/>
        </authorList>
    </citation>
    <scope>NUCLEOTIDE SEQUENCE [LARGE SCALE GENOMIC DNA]</scope>
    <source>
        <strain>K96243</strain>
    </source>
</reference>
<protein>
    <recommendedName>
        <fullName evidence="1">Oxygen-dependent coproporphyrinogen-III oxidase</fullName>
        <shortName evidence="1">CPO</shortName>
        <shortName evidence="1">Coprogen oxidase</shortName>
        <shortName evidence="1">Coproporphyrinogenase</shortName>
        <ecNumber evidence="1">1.3.3.3</ecNumber>
    </recommendedName>
</protein>
<keyword id="KW-0963">Cytoplasm</keyword>
<keyword id="KW-0350">Heme biosynthesis</keyword>
<keyword id="KW-0479">Metal-binding</keyword>
<keyword id="KW-0560">Oxidoreductase</keyword>
<keyword id="KW-0627">Porphyrin biosynthesis</keyword>
<keyword id="KW-1185">Reference proteome</keyword>
<evidence type="ECO:0000255" key="1">
    <source>
        <dbReference type="HAMAP-Rule" id="MF_00333"/>
    </source>
</evidence>
<name>HEM6_BURPS</name>
<proteinExistence type="inferred from homology"/>
<sequence>MTDSTYDVNRVRAYLQGLQMRIADALGAFDGTPLAADTWRRGPGERLRGGGCTRILEAGGFFERAGIGFSDVAGDALPPSASASRPQLAGRGFEALGVSLVLHPRNPYCPTVHMNVRMLIATKPGEAPVFWFGGGMDLTPIYGFEEDARHFHRTCRAALEPFGAELYPRFKKWCDDYFFLKHRNEARGIGGIFFDDFSELGFERSFEMLQSVGDAFLPSYLPIVERRRDTPYGERERAFQAYRRGRYVEFNLVFDRGTLFGLQSGGRTESILLSMPPTAGWRYDWHPDPGTPEARLQSEFLVPRDWA</sequence>